<accession>C9SB49</accession>
<sequence>MAAQAPTEALKELQVGEAATTNGKEAPDGNAGRQRQRRLGGRGRCGPRCSPAVRVPLRRRRRRRRTRKKKKAPTAQSDPPRVLMSQLFPQKNYPVGEECEYLNENAYRTTDEEKRHLDNLNSDFLTDYREAAEIHRQVRQWAQKNIKPGQGLTEIAEGIEDGVRALTGHWGLEEGDALKGGMGFPTGLSINHCAAHYTPNLGNKMVLQQEDVMKVDFGVHVNGRIVDSAFTLAFEPKYDNLLTAVREATNAGVKEAGIDVRVGDIGGVIQEVMESYEVEIDGTTYPVKSIRNLNGHTIERWSIHGAKSVPIVKSNDTTKMEEGDVFAVETFGSTGNGYVRDDMEVSHYAKRGDSNVPLRLDSAKRLLNVINKNFGTLPFCRRYLDRLGQEKYLLGLNNLVSAGIVEAYPPLVDKKGSYTAQFEHTILIRPTVKEVISRGEDY</sequence>
<comment type="function">
    <text evidence="1">Cotranslationally removes the N-terminal methionine from nascent proteins. The N-terminal methionine is often cleaved when the second residue in the primary sequence is small and uncharged (Met-Ala-, Cys, Gly, Pro, Ser, Thr, or Val).</text>
</comment>
<comment type="catalytic activity">
    <reaction evidence="1">
        <text>Release of N-terminal amino acids, preferentially methionine, from peptides and arylamides.</text>
        <dbReference type="EC" id="3.4.11.18"/>
    </reaction>
</comment>
<comment type="cofactor">
    <cofactor evidence="1">
        <name>Co(2+)</name>
        <dbReference type="ChEBI" id="CHEBI:48828"/>
    </cofactor>
    <cofactor evidence="1">
        <name>Zn(2+)</name>
        <dbReference type="ChEBI" id="CHEBI:29105"/>
    </cofactor>
    <cofactor evidence="1">
        <name>Mn(2+)</name>
        <dbReference type="ChEBI" id="CHEBI:29035"/>
    </cofactor>
    <cofactor evidence="1">
        <name>Fe(2+)</name>
        <dbReference type="ChEBI" id="CHEBI:29033"/>
    </cofactor>
    <text evidence="1">Binds 2 divalent metal cations per subunit. Has a high-affinity and a low affinity metal-binding site. The true nature of the physiological cofactor is under debate. The enzyme is active with cobalt, zinc, manganese or divalent iron ions. Most likely, methionine aminopeptidases function as mononuclear Fe(2+)-metalloproteases under physiological conditions, and the catalytically relevant metal-binding site has been assigned to the histidine-containing high-affinity site.</text>
</comment>
<comment type="subcellular location">
    <subcellularLocation>
        <location evidence="1">Cytoplasm</location>
    </subcellularLocation>
</comment>
<comment type="similarity">
    <text evidence="1">Belongs to the peptidase M24A family. Methionine aminopeptidase eukaryotic type 2 subfamily.</text>
</comment>
<evidence type="ECO:0000255" key="1">
    <source>
        <dbReference type="HAMAP-Rule" id="MF_03175"/>
    </source>
</evidence>
<evidence type="ECO:0000256" key="2">
    <source>
        <dbReference type="SAM" id="MobiDB-lite"/>
    </source>
</evidence>
<dbReference type="EC" id="3.4.11.18" evidence="1"/>
<dbReference type="EMBL" id="DS985215">
    <property type="protein sequence ID" value="EEY15599.1"/>
    <property type="molecule type" value="Genomic_DNA"/>
</dbReference>
<dbReference type="RefSeq" id="XP_003007520.1">
    <property type="nucleotide sequence ID" value="XM_003007474.1"/>
</dbReference>
<dbReference type="SMR" id="C9SB49"/>
<dbReference type="STRING" id="526221.C9SB49"/>
<dbReference type="GeneID" id="9533849"/>
<dbReference type="KEGG" id="val:VDBG_01708"/>
<dbReference type="eggNOG" id="KOG2775">
    <property type="taxonomic scope" value="Eukaryota"/>
</dbReference>
<dbReference type="HOGENOM" id="CLU_015857_7_1_1"/>
<dbReference type="OMA" id="PFAKRWL"/>
<dbReference type="OrthoDB" id="7848262at2759"/>
<dbReference type="Proteomes" id="UP000008698">
    <property type="component" value="Unassembled WGS sequence"/>
</dbReference>
<dbReference type="GO" id="GO:0005737">
    <property type="term" value="C:cytoplasm"/>
    <property type="evidence" value="ECO:0007669"/>
    <property type="project" value="UniProtKB-SubCell"/>
</dbReference>
<dbReference type="GO" id="GO:0004239">
    <property type="term" value="F:initiator methionyl aminopeptidase activity"/>
    <property type="evidence" value="ECO:0007669"/>
    <property type="project" value="UniProtKB-UniRule"/>
</dbReference>
<dbReference type="GO" id="GO:0046872">
    <property type="term" value="F:metal ion binding"/>
    <property type="evidence" value="ECO:0007669"/>
    <property type="project" value="UniProtKB-UniRule"/>
</dbReference>
<dbReference type="GO" id="GO:0070006">
    <property type="term" value="F:metalloaminopeptidase activity"/>
    <property type="evidence" value="ECO:0007669"/>
    <property type="project" value="UniProtKB-UniRule"/>
</dbReference>
<dbReference type="GO" id="GO:0006508">
    <property type="term" value="P:proteolysis"/>
    <property type="evidence" value="ECO:0007669"/>
    <property type="project" value="UniProtKB-KW"/>
</dbReference>
<dbReference type="CDD" id="cd01088">
    <property type="entry name" value="MetAP2"/>
    <property type="match status" value="1"/>
</dbReference>
<dbReference type="Gene3D" id="3.90.230.10">
    <property type="entry name" value="Creatinase/methionine aminopeptidase superfamily"/>
    <property type="match status" value="1"/>
</dbReference>
<dbReference type="Gene3D" id="1.10.10.10">
    <property type="entry name" value="Winged helix-like DNA-binding domain superfamily/Winged helix DNA-binding domain"/>
    <property type="match status" value="1"/>
</dbReference>
<dbReference type="HAMAP" id="MF_03175">
    <property type="entry name" value="MetAP_2_euk"/>
    <property type="match status" value="1"/>
</dbReference>
<dbReference type="InterPro" id="IPR036005">
    <property type="entry name" value="Creatinase/aminopeptidase-like"/>
</dbReference>
<dbReference type="InterPro" id="IPR050247">
    <property type="entry name" value="Met_Aminopeptidase_Type2"/>
</dbReference>
<dbReference type="InterPro" id="IPR000994">
    <property type="entry name" value="Pept_M24"/>
</dbReference>
<dbReference type="InterPro" id="IPR001714">
    <property type="entry name" value="Pept_M24_MAP"/>
</dbReference>
<dbReference type="InterPro" id="IPR002468">
    <property type="entry name" value="Pept_M24A_MAP2"/>
</dbReference>
<dbReference type="InterPro" id="IPR018349">
    <property type="entry name" value="Pept_M24A_MAP2_BS"/>
</dbReference>
<dbReference type="InterPro" id="IPR036388">
    <property type="entry name" value="WH-like_DNA-bd_sf"/>
</dbReference>
<dbReference type="InterPro" id="IPR036390">
    <property type="entry name" value="WH_DNA-bd_sf"/>
</dbReference>
<dbReference type="NCBIfam" id="TIGR00501">
    <property type="entry name" value="met_pdase_II"/>
    <property type="match status" value="1"/>
</dbReference>
<dbReference type="PANTHER" id="PTHR45777">
    <property type="entry name" value="METHIONINE AMINOPEPTIDASE 2"/>
    <property type="match status" value="1"/>
</dbReference>
<dbReference type="PANTHER" id="PTHR45777:SF2">
    <property type="entry name" value="METHIONINE AMINOPEPTIDASE 2"/>
    <property type="match status" value="1"/>
</dbReference>
<dbReference type="Pfam" id="PF00557">
    <property type="entry name" value="Peptidase_M24"/>
    <property type="match status" value="1"/>
</dbReference>
<dbReference type="PRINTS" id="PR00599">
    <property type="entry name" value="MAPEPTIDASE"/>
</dbReference>
<dbReference type="SUPFAM" id="SSF55920">
    <property type="entry name" value="Creatinase/aminopeptidase"/>
    <property type="match status" value="1"/>
</dbReference>
<dbReference type="SUPFAM" id="SSF46785">
    <property type="entry name" value="Winged helix' DNA-binding domain"/>
    <property type="match status" value="1"/>
</dbReference>
<dbReference type="PROSITE" id="PS01202">
    <property type="entry name" value="MAP_2"/>
    <property type="match status" value="1"/>
</dbReference>
<organism>
    <name type="scientific">Verticillium alfalfae (strain VaMs.102 / ATCC MYA-4576 / FGSC 10136)</name>
    <name type="common">Verticillium wilt of alfalfa</name>
    <name type="synonym">Verticillium albo-atrum</name>
    <dbReference type="NCBI Taxonomy" id="526221"/>
    <lineage>
        <taxon>Eukaryota</taxon>
        <taxon>Fungi</taxon>
        <taxon>Dikarya</taxon>
        <taxon>Ascomycota</taxon>
        <taxon>Pezizomycotina</taxon>
        <taxon>Sordariomycetes</taxon>
        <taxon>Hypocreomycetidae</taxon>
        <taxon>Glomerellales</taxon>
        <taxon>Plectosphaerellaceae</taxon>
        <taxon>Verticillium</taxon>
    </lineage>
</organism>
<gene>
    <name type="ORF">VDBG_01708</name>
</gene>
<name>MAP2_VERA1</name>
<proteinExistence type="inferred from homology"/>
<protein>
    <recommendedName>
        <fullName evidence="1">Methionine aminopeptidase 2</fullName>
        <shortName evidence="1">MAP 2</shortName>
        <shortName evidence="1">MetAP 2</shortName>
        <ecNumber evidence="1">3.4.11.18</ecNumber>
    </recommendedName>
    <alternativeName>
        <fullName evidence="1">Peptidase M</fullName>
    </alternativeName>
</protein>
<reference key="1">
    <citation type="journal article" date="2011" name="PLoS Pathog.">
        <title>Comparative genomics yields insights into niche adaptation of plant vascular wilt pathogens.</title>
        <authorList>
            <person name="Klosterman S.J."/>
            <person name="Subbarao K.V."/>
            <person name="Kang S."/>
            <person name="Veronese P."/>
            <person name="Gold S.E."/>
            <person name="Thomma B.P.H.J."/>
            <person name="Chen Z."/>
            <person name="Henrissat B."/>
            <person name="Lee Y.-H."/>
            <person name="Park J."/>
            <person name="Garcia-Pedrajas M.D."/>
            <person name="Barbara D.J."/>
            <person name="Anchieta A."/>
            <person name="de Jonge R."/>
            <person name="Santhanam P."/>
            <person name="Maruthachalam K."/>
            <person name="Atallah Z."/>
            <person name="Amyotte S.G."/>
            <person name="Paz Z."/>
            <person name="Inderbitzin P."/>
            <person name="Hayes R.J."/>
            <person name="Heiman D.I."/>
            <person name="Young S."/>
            <person name="Zeng Q."/>
            <person name="Engels R."/>
            <person name="Galagan J."/>
            <person name="Cuomo C.A."/>
            <person name="Dobinson K.F."/>
            <person name="Ma L.-J."/>
        </authorList>
    </citation>
    <scope>NUCLEOTIDE SEQUENCE [LARGE SCALE GENOMIC DNA]</scope>
    <source>
        <strain>VaMs.102 / ATCC MYA-4576 / FGSC 10136</strain>
    </source>
</reference>
<keyword id="KW-0031">Aminopeptidase</keyword>
<keyword id="KW-0963">Cytoplasm</keyword>
<keyword id="KW-0378">Hydrolase</keyword>
<keyword id="KW-0479">Metal-binding</keyword>
<keyword id="KW-0645">Protease</keyword>
<keyword id="KW-1185">Reference proteome</keyword>
<feature type="chain" id="PRO_0000407672" description="Methionine aminopeptidase 2">
    <location>
        <begin position="1"/>
        <end position="442"/>
    </location>
</feature>
<feature type="region of interest" description="Disordered" evidence="2">
    <location>
        <begin position="1"/>
        <end position="81"/>
    </location>
</feature>
<feature type="compositionally biased region" description="Basic residues" evidence="2">
    <location>
        <begin position="56"/>
        <end position="72"/>
    </location>
</feature>
<feature type="binding site" evidence="1">
    <location>
        <position position="196"/>
    </location>
    <ligand>
        <name>substrate</name>
    </ligand>
</feature>
<feature type="binding site" evidence="1">
    <location>
        <position position="216"/>
    </location>
    <ligand>
        <name>a divalent metal cation</name>
        <dbReference type="ChEBI" id="CHEBI:60240"/>
        <label>1</label>
    </ligand>
</feature>
<feature type="binding site" evidence="1">
    <location>
        <position position="227"/>
    </location>
    <ligand>
        <name>a divalent metal cation</name>
        <dbReference type="ChEBI" id="CHEBI:60240"/>
        <label>1</label>
    </ligand>
</feature>
<feature type="binding site" evidence="1">
    <location>
        <position position="227"/>
    </location>
    <ligand>
        <name>a divalent metal cation</name>
        <dbReference type="ChEBI" id="CHEBI:60240"/>
        <label>2</label>
        <note>catalytic</note>
    </ligand>
</feature>
<feature type="binding site" evidence="1">
    <location>
        <position position="296"/>
    </location>
    <ligand>
        <name>a divalent metal cation</name>
        <dbReference type="ChEBI" id="CHEBI:60240"/>
        <label>2</label>
        <note>catalytic</note>
    </ligand>
</feature>
<feature type="binding site" evidence="1">
    <location>
        <position position="304"/>
    </location>
    <ligand>
        <name>substrate</name>
    </ligand>
</feature>
<feature type="binding site" evidence="1">
    <location>
        <position position="329"/>
    </location>
    <ligand>
        <name>a divalent metal cation</name>
        <dbReference type="ChEBI" id="CHEBI:60240"/>
        <label>2</label>
        <note>catalytic</note>
    </ligand>
</feature>
<feature type="binding site" evidence="1">
    <location>
        <position position="423"/>
    </location>
    <ligand>
        <name>a divalent metal cation</name>
        <dbReference type="ChEBI" id="CHEBI:60240"/>
        <label>1</label>
    </ligand>
</feature>
<feature type="binding site" evidence="1">
    <location>
        <position position="423"/>
    </location>
    <ligand>
        <name>a divalent metal cation</name>
        <dbReference type="ChEBI" id="CHEBI:60240"/>
        <label>2</label>
        <note>catalytic</note>
    </ligand>
</feature>